<keyword id="KW-0413">Isomerase</keyword>
<keyword id="KW-1185">Reference proteome</keyword>
<keyword id="KW-0819">tRNA processing</keyword>
<comment type="function">
    <text evidence="1">Responsible for synthesis of pseudouridine from uracil-55 in the psi GC loop of transfer RNAs.</text>
</comment>
<comment type="catalytic activity">
    <reaction evidence="1">
        <text>uridine(55) in tRNA = pseudouridine(55) in tRNA</text>
        <dbReference type="Rhea" id="RHEA:42532"/>
        <dbReference type="Rhea" id="RHEA-COMP:10101"/>
        <dbReference type="Rhea" id="RHEA-COMP:10102"/>
        <dbReference type="ChEBI" id="CHEBI:65314"/>
        <dbReference type="ChEBI" id="CHEBI:65315"/>
        <dbReference type="EC" id="5.4.99.25"/>
    </reaction>
</comment>
<comment type="similarity">
    <text evidence="1">Belongs to the pseudouridine synthase TruB family. Type 1 subfamily.</text>
</comment>
<name>TRUB_NOSS1</name>
<feature type="chain" id="PRO_0000121780" description="tRNA pseudouridine synthase B">
    <location>
        <begin position="1"/>
        <end position="293"/>
    </location>
</feature>
<feature type="active site" description="Nucleophile" evidence="1">
    <location>
        <position position="38"/>
    </location>
</feature>
<accession>Q8YWR1</accession>
<dbReference type="EC" id="5.4.99.25" evidence="1"/>
<dbReference type="EMBL" id="BA000019">
    <property type="protein sequence ID" value="BAB77909.1"/>
    <property type="molecule type" value="Genomic_DNA"/>
</dbReference>
<dbReference type="PIR" id="AI1998">
    <property type="entry name" value="AI1998"/>
</dbReference>
<dbReference type="RefSeq" id="WP_010995712.1">
    <property type="nucleotide sequence ID" value="NZ_RSCN01000022.1"/>
</dbReference>
<dbReference type="SMR" id="Q8YWR1"/>
<dbReference type="STRING" id="103690.gene:10493556"/>
<dbReference type="KEGG" id="ana:alr1543"/>
<dbReference type="eggNOG" id="COG0130">
    <property type="taxonomic scope" value="Bacteria"/>
</dbReference>
<dbReference type="OrthoDB" id="9802309at2"/>
<dbReference type="Proteomes" id="UP000002483">
    <property type="component" value="Chromosome"/>
</dbReference>
<dbReference type="GO" id="GO:0003723">
    <property type="term" value="F:RNA binding"/>
    <property type="evidence" value="ECO:0007669"/>
    <property type="project" value="InterPro"/>
</dbReference>
<dbReference type="GO" id="GO:0160148">
    <property type="term" value="F:tRNA pseudouridine(55) synthase activity"/>
    <property type="evidence" value="ECO:0007669"/>
    <property type="project" value="UniProtKB-EC"/>
</dbReference>
<dbReference type="GO" id="GO:1990481">
    <property type="term" value="P:mRNA pseudouridine synthesis"/>
    <property type="evidence" value="ECO:0007669"/>
    <property type="project" value="TreeGrafter"/>
</dbReference>
<dbReference type="GO" id="GO:0031119">
    <property type="term" value="P:tRNA pseudouridine synthesis"/>
    <property type="evidence" value="ECO:0007669"/>
    <property type="project" value="UniProtKB-UniRule"/>
</dbReference>
<dbReference type="CDD" id="cd02573">
    <property type="entry name" value="PseudoU_synth_EcTruB"/>
    <property type="match status" value="1"/>
</dbReference>
<dbReference type="CDD" id="cd21152">
    <property type="entry name" value="PUA_TruB_bacterial"/>
    <property type="match status" value="1"/>
</dbReference>
<dbReference type="Gene3D" id="3.30.2350.10">
    <property type="entry name" value="Pseudouridine synthase"/>
    <property type="match status" value="1"/>
</dbReference>
<dbReference type="Gene3D" id="2.30.130.10">
    <property type="entry name" value="PUA domain"/>
    <property type="match status" value="1"/>
</dbReference>
<dbReference type="HAMAP" id="MF_01080">
    <property type="entry name" value="TruB_bact"/>
    <property type="match status" value="1"/>
</dbReference>
<dbReference type="InterPro" id="IPR020103">
    <property type="entry name" value="PsdUridine_synth_cat_dom_sf"/>
</dbReference>
<dbReference type="InterPro" id="IPR002501">
    <property type="entry name" value="PsdUridine_synth_N"/>
</dbReference>
<dbReference type="InterPro" id="IPR015947">
    <property type="entry name" value="PUA-like_sf"/>
</dbReference>
<dbReference type="InterPro" id="IPR036974">
    <property type="entry name" value="PUA_sf"/>
</dbReference>
<dbReference type="InterPro" id="IPR014780">
    <property type="entry name" value="tRNA_psdUridine_synth_TruB"/>
</dbReference>
<dbReference type="InterPro" id="IPR015240">
    <property type="entry name" value="tRNA_sdUridine_synth_fam1_C"/>
</dbReference>
<dbReference type="NCBIfam" id="TIGR00431">
    <property type="entry name" value="TruB"/>
    <property type="match status" value="1"/>
</dbReference>
<dbReference type="PANTHER" id="PTHR13767:SF2">
    <property type="entry name" value="PSEUDOURIDYLATE SYNTHASE TRUB1"/>
    <property type="match status" value="1"/>
</dbReference>
<dbReference type="PANTHER" id="PTHR13767">
    <property type="entry name" value="TRNA-PSEUDOURIDINE SYNTHASE"/>
    <property type="match status" value="1"/>
</dbReference>
<dbReference type="Pfam" id="PF09157">
    <property type="entry name" value="TruB-C_2"/>
    <property type="match status" value="1"/>
</dbReference>
<dbReference type="Pfam" id="PF01509">
    <property type="entry name" value="TruB_N"/>
    <property type="match status" value="1"/>
</dbReference>
<dbReference type="SUPFAM" id="SSF55120">
    <property type="entry name" value="Pseudouridine synthase"/>
    <property type="match status" value="1"/>
</dbReference>
<dbReference type="SUPFAM" id="SSF88697">
    <property type="entry name" value="PUA domain-like"/>
    <property type="match status" value="1"/>
</dbReference>
<reference key="1">
    <citation type="journal article" date="2001" name="DNA Res.">
        <title>Complete genomic sequence of the filamentous nitrogen-fixing cyanobacterium Anabaena sp. strain PCC 7120.</title>
        <authorList>
            <person name="Kaneko T."/>
            <person name="Nakamura Y."/>
            <person name="Wolk C.P."/>
            <person name="Kuritz T."/>
            <person name="Sasamoto S."/>
            <person name="Watanabe A."/>
            <person name="Iriguchi M."/>
            <person name="Ishikawa A."/>
            <person name="Kawashima K."/>
            <person name="Kimura T."/>
            <person name="Kishida Y."/>
            <person name="Kohara M."/>
            <person name="Matsumoto M."/>
            <person name="Matsuno A."/>
            <person name="Muraki A."/>
            <person name="Nakazaki N."/>
            <person name="Shimpo S."/>
            <person name="Sugimoto M."/>
            <person name="Takazawa M."/>
            <person name="Yamada M."/>
            <person name="Yasuda M."/>
            <person name="Tabata S."/>
        </authorList>
    </citation>
    <scope>NUCLEOTIDE SEQUENCE [LARGE SCALE GENOMIC DNA]</scope>
    <source>
        <strain>PCC 7120 / SAG 25.82 / UTEX 2576</strain>
    </source>
</reference>
<gene>
    <name evidence="1" type="primary">truB</name>
    <name type="ordered locus">alr1543</name>
</gene>
<evidence type="ECO:0000255" key="1">
    <source>
        <dbReference type="HAMAP-Rule" id="MF_01080"/>
    </source>
</evidence>
<organism>
    <name type="scientific">Nostoc sp. (strain PCC 7120 / SAG 25.82 / UTEX 2576)</name>
    <dbReference type="NCBI Taxonomy" id="103690"/>
    <lineage>
        <taxon>Bacteria</taxon>
        <taxon>Bacillati</taxon>
        <taxon>Cyanobacteriota</taxon>
        <taxon>Cyanophyceae</taxon>
        <taxon>Nostocales</taxon>
        <taxon>Nostocaceae</taxon>
        <taxon>Nostoc</taxon>
    </lineage>
</organism>
<sequence>MQGFINLNKQFGWTSHDCVARLRKMLRLKRVGHAGTLDPAATGVLPIAVGKATRLLQYLPSDKAYKATVRFGVQTTTDDLQGEIITSQPCRGLSLSEVKTALPQFIGKIEQIPPIYSAIQVEGKRLYDLARKGEIIEVPARTVEVFSIDVLDWREGDFPELDVAIACGSGTYIRAIARDLGAVFHTGGTLAALIRTHSSGFNLTDSLTLTDLETQLQAGTFEPTPADAALQCLPSVTLPSISAQKWCQGQRIELNLETIGKVRVYQAETNIFLGIGELQAGVLIPQMVFEPIS</sequence>
<protein>
    <recommendedName>
        <fullName evidence="1">tRNA pseudouridine synthase B</fullName>
        <ecNumber evidence="1">5.4.99.25</ecNumber>
    </recommendedName>
    <alternativeName>
        <fullName evidence="1">tRNA pseudouridine(55) synthase</fullName>
        <shortName evidence="1">Psi55 synthase</shortName>
    </alternativeName>
    <alternativeName>
        <fullName evidence="1">tRNA pseudouridylate synthase</fullName>
    </alternativeName>
    <alternativeName>
        <fullName evidence="1">tRNA-uridine isomerase</fullName>
    </alternativeName>
</protein>
<proteinExistence type="inferred from homology"/>